<name>ROGF9_ARATH</name>
<dbReference type="EMBL" id="AL049751">
    <property type="protein sequence ID" value="CAB41934.1"/>
    <property type="molecule type" value="Genomic_DNA"/>
</dbReference>
<dbReference type="EMBL" id="AL161535">
    <property type="protein sequence ID" value="CAB78366.1"/>
    <property type="molecule type" value="Genomic_DNA"/>
</dbReference>
<dbReference type="EMBL" id="CP002687">
    <property type="protein sequence ID" value="AEE83250.1"/>
    <property type="molecule type" value="Genomic_DNA"/>
</dbReference>
<dbReference type="EMBL" id="DQ446830">
    <property type="protein sequence ID" value="ABE66063.1"/>
    <property type="molecule type" value="mRNA"/>
</dbReference>
<dbReference type="EMBL" id="DQ653196">
    <property type="protein sequence ID" value="ABK28630.1"/>
    <property type="status" value="ALT_SEQ"/>
    <property type="molecule type" value="mRNA"/>
</dbReference>
<dbReference type="PIR" id="T07704">
    <property type="entry name" value="T07704"/>
</dbReference>
<dbReference type="RefSeq" id="NP_193060.1">
    <property type="nucleotide sequence ID" value="NM_117395.3"/>
</dbReference>
<dbReference type="SMR" id="Q9SVQ3"/>
<dbReference type="BioGRID" id="12238">
    <property type="interactions" value="2"/>
</dbReference>
<dbReference type="IntAct" id="Q9SVQ3">
    <property type="interactions" value="1"/>
</dbReference>
<dbReference type="MINT" id="Q9SVQ3"/>
<dbReference type="STRING" id="3702.Q9SVQ3"/>
<dbReference type="PaxDb" id="3702-AT4G13240.1"/>
<dbReference type="ProteomicsDB" id="228015"/>
<dbReference type="EnsemblPlants" id="AT4G13240.1">
    <property type="protein sequence ID" value="AT4G13240.1"/>
    <property type="gene ID" value="AT4G13240"/>
</dbReference>
<dbReference type="GeneID" id="826941"/>
<dbReference type="Gramene" id="AT4G13240.1">
    <property type="protein sequence ID" value="AT4G13240.1"/>
    <property type="gene ID" value="AT4G13240"/>
</dbReference>
<dbReference type="KEGG" id="ath:AT4G13240"/>
<dbReference type="Araport" id="AT4G13240"/>
<dbReference type="TAIR" id="AT4G13240">
    <property type="gene designation" value="ROPGEF9"/>
</dbReference>
<dbReference type="eggNOG" id="ENOG502QSGR">
    <property type="taxonomic scope" value="Eukaryota"/>
</dbReference>
<dbReference type="HOGENOM" id="CLU_019073_1_0_1"/>
<dbReference type="InParanoid" id="Q9SVQ3"/>
<dbReference type="OMA" id="MAIPDSY"/>
<dbReference type="PhylomeDB" id="Q9SVQ3"/>
<dbReference type="PRO" id="PR:Q9SVQ3"/>
<dbReference type="Proteomes" id="UP000006548">
    <property type="component" value="Chromosome 4"/>
</dbReference>
<dbReference type="ExpressionAtlas" id="Q9SVQ3">
    <property type="expression patterns" value="baseline and differential"/>
</dbReference>
<dbReference type="GO" id="GO:0005886">
    <property type="term" value="C:plasma membrane"/>
    <property type="evidence" value="ECO:0007669"/>
    <property type="project" value="UniProtKB-SubCell"/>
</dbReference>
<dbReference type="GO" id="GO:0005085">
    <property type="term" value="F:guanyl-nucleotide exchange factor activity"/>
    <property type="evidence" value="ECO:0000250"/>
    <property type="project" value="TAIR"/>
</dbReference>
<dbReference type="GO" id="GO:0080092">
    <property type="term" value="P:regulation of pollen tube growth"/>
    <property type="evidence" value="ECO:0000316"/>
    <property type="project" value="TAIR"/>
</dbReference>
<dbReference type="FunFam" id="1.20.58.2010:FF:000001">
    <property type="entry name" value="Rop guanine nucleotide exchange factor 14"/>
    <property type="match status" value="1"/>
</dbReference>
<dbReference type="FunFam" id="1.20.58.2010:FF:000003">
    <property type="entry name" value="Rop guanine nucleotide exchange factor 14"/>
    <property type="match status" value="1"/>
</dbReference>
<dbReference type="FunFam" id="1.20.58.1310:FF:000001">
    <property type="entry name" value="Rop guanine nucleotide exchange factor 9"/>
    <property type="match status" value="1"/>
</dbReference>
<dbReference type="Gene3D" id="1.20.58.2010">
    <property type="entry name" value="PRONE domain, subdomain 1"/>
    <property type="match status" value="1"/>
</dbReference>
<dbReference type="Gene3D" id="1.20.58.1310">
    <property type="entry name" value="PRONE domain, subdomain 2"/>
    <property type="match status" value="1"/>
</dbReference>
<dbReference type="InterPro" id="IPR005512">
    <property type="entry name" value="PRONE_dom"/>
</dbReference>
<dbReference type="InterPro" id="IPR038937">
    <property type="entry name" value="RopGEF"/>
</dbReference>
<dbReference type="PANTHER" id="PTHR33101:SF55">
    <property type="entry name" value="RHO GUANINE NUCLEOTIDE EXCHANGE FACTOR 8-RELATED"/>
    <property type="match status" value="1"/>
</dbReference>
<dbReference type="PANTHER" id="PTHR33101">
    <property type="entry name" value="ROP GUANINE NUCLEOTIDE EXCHANGE FACTOR 1"/>
    <property type="match status" value="1"/>
</dbReference>
<dbReference type="Pfam" id="PF03759">
    <property type="entry name" value="PRONE"/>
    <property type="match status" value="1"/>
</dbReference>
<dbReference type="PROSITE" id="PS51334">
    <property type="entry name" value="PRONE"/>
    <property type="match status" value="1"/>
</dbReference>
<organism>
    <name type="scientific">Arabidopsis thaliana</name>
    <name type="common">Mouse-ear cress</name>
    <dbReference type="NCBI Taxonomy" id="3702"/>
    <lineage>
        <taxon>Eukaryota</taxon>
        <taxon>Viridiplantae</taxon>
        <taxon>Streptophyta</taxon>
        <taxon>Embryophyta</taxon>
        <taxon>Tracheophyta</taxon>
        <taxon>Spermatophyta</taxon>
        <taxon>Magnoliopsida</taxon>
        <taxon>eudicotyledons</taxon>
        <taxon>Gunneridae</taxon>
        <taxon>Pentapetalae</taxon>
        <taxon>rosids</taxon>
        <taxon>malvids</taxon>
        <taxon>Brassicales</taxon>
        <taxon>Brassicaceae</taxon>
        <taxon>Camelineae</taxon>
        <taxon>Arabidopsis</taxon>
    </lineage>
</organism>
<reference key="1">
    <citation type="journal article" date="1999" name="Nature">
        <title>Sequence and analysis of chromosome 4 of the plant Arabidopsis thaliana.</title>
        <authorList>
            <person name="Mayer K.F.X."/>
            <person name="Schueller C."/>
            <person name="Wambutt R."/>
            <person name="Murphy G."/>
            <person name="Volckaert G."/>
            <person name="Pohl T."/>
            <person name="Duesterhoeft A."/>
            <person name="Stiekema W."/>
            <person name="Entian K.-D."/>
            <person name="Terryn N."/>
            <person name="Harris B."/>
            <person name="Ansorge W."/>
            <person name="Brandt P."/>
            <person name="Grivell L.A."/>
            <person name="Rieger M."/>
            <person name="Weichselgartner M."/>
            <person name="de Simone V."/>
            <person name="Obermaier B."/>
            <person name="Mache R."/>
            <person name="Mueller M."/>
            <person name="Kreis M."/>
            <person name="Delseny M."/>
            <person name="Puigdomenech P."/>
            <person name="Watson M."/>
            <person name="Schmidtheini T."/>
            <person name="Reichert B."/>
            <person name="Portetelle D."/>
            <person name="Perez-Alonso M."/>
            <person name="Boutry M."/>
            <person name="Bancroft I."/>
            <person name="Vos P."/>
            <person name="Hoheisel J."/>
            <person name="Zimmermann W."/>
            <person name="Wedler H."/>
            <person name="Ridley P."/>
            <person name="Langham S.-A."/>
            <person name="McCullagh B."/>
            <person name="Bilham L."/>
            <person name="Robben J."/>
            <person name="van der Schueren J."/>
            <person name="Grymonprez B."/>
            <person name="Chuang Y.-J."/>
            <person name="Vandenbussche F."/>
            <person name="Braeken M."/>
            <person name="Weltjens I."/>
            <person name="Voet M."/>
            <person name="Bastiaens I."/>
            <person name="Aert R."/>
            <person name="Defoor E."/>
            <person name="Weitzenegger T."/>
            <person name="Bothe G."/>
            <person name="Ramsperger U."/>
            <person name="Hilbert H."/>
            <person name="Braun M."/>
            <person name="Holzer E."/>
            <person name="Brandt A."/>
            <person name="Peters S."/>
            <person name="van Staveren M."/>
            <person name="Dirkse W."/>
            <person name="Mooijman P."/>
            <person name="Klein Lankhorst R."/>
            <person name="Rose M."/>
            <person name="Hauf J."/>
            <person name="Koetter P."/>
            <person name="Berneiser S."/>
            <person name="Hempel S."/>
            <person name="Feldpausch M."/>
            <person name="Lamberth S."/>
            <person name="Van den Daele H."/>
            <person name="De Keyser A."/>
            <person name="Buysshaert C."/>
            <person name="Gielen J."/>
            <person name="Villarroel R."/>
            <person name="De Clercq R."/>
            <person name="van Montagu M."/>
            <person name="Rogers J."/>
            <person name="Cronin A."/>
            <person name="Quail M.A."/>
            <person name="Bray-Allen S."/>
            <person name="Clark L."/>
            <person name="Doggett J."/>
            <person name="Hall S."/>
            <person name="Kay M."/>
            <person name="Lennard N."/>
            <person name="McLay K."/>
            <person name="Mayes R."/>
            <person name="Pettett A."/>
            <person name="Rajandream M.A."/>
            <person name="Lyne M."/>
            <person name="Benes V."/>
            <person name="Rechmann S."/>
            <person name="Borkova D."/>
            <person name="Bloecker H."/>
            <person name="Scharfe M."/>
            <person name="Grimm M."/>
            <person name="Loehnert T.-H."/>
            <person name="Dose S."/>
            <person name="de Haan M."/>
            <person name="Maarse A.C."/>
            <person name="Schaefer M."/>
            <person name="Mueller-Auer S."/>
            <person name="Gabel C."/>
            <person name="Fuchs M."/>
            <person name="Fartmann B."/>
            <person name="Granderath K."/>
            <person name="Dauner D."/>
            <person name="Herzl A."/>
            <person name="Neumann S."/>
            <person name="Argiriou A."/>
            <person name="Vitale D."/>
            <person name="Liguori R."/>
            <person name="Piravandi E."/>
            <person name="Massenet O."/>
            <person name="Quigley F."/>
            <person name="Clabauld G."/>
            <person name="Muendlein A."/>
            <person name="Felber R."/>
            <person name="Schnabl S."/>
            <person name="Hiller R."/>
            <person name="Schmidt W."/>
            <person name="Lecharny A."/>
            <person name="Aubourg S."/>
            <person name="Chefdor F."/>
            <person name="Cooke R."/>
            <person name="Berger C."/>
            <person name="Monfort A."/>
            <person name="Casacuberta E."/>
            <person name="Gibbons T."/>
            <person name="Weber N."/>
            <person name="Vandenbol M."/>
            <person name="Bargues M."/>
            <person name="Terol J."/>
            <person name="Torres A."/>
            <person name="Perez-Perez A."/>
            <person name="Purnelle B."/>
            <person name="Bent E."/>
            <person name="Johnson S."/>
            <person name="Tacon D."/>
            <person name="Jesse T."/>
            <person name="Heijnen L."/>
            <person name="Schwarz S."/>
            <person name="Scholler P."/>
            <person name="Heber S."/>
            <person name="Francs P."/>
            <person name="Bielke C."/>
            <person name="Frishman D."/>
            <person name="Haase D."/>
            <person name="Lemcke K."/>
            <person name="Mewes H.-W."/>
            <person name="Stocker S."/>
            <person name="Zaccaria P."/>
            <person name="Bevan M."/>
            <person name="Wilson R.K."/>
            <person name="de la Bastide M."/>
            <person name="Habermann K."/>
            <person name="Parnell L."/>
            <person name="Dedhia N."/>
            <person name="Gnoj L."/>
            <person name="Schutz K."/>
            <person name="Huang E."/>
            <person name="Spiegel L."/>
            <person name="Sekhon M."/>
            <person name="Murray J."/>
            <person name="Sheet P."/>
            <person name="Cordes M."/>
            <person name="Abu-Threideh J."/>
            <person name="Stoneking T."/>
            <person name="Kalicki J."/>
            <person name="Graves T."/>
            <person name="Harmon G."/>
            <person name="Edwards J."/>
            <person name="Latreille P."/>
            <person name="Courtney L."/>
            <person name="Cloud J."/>
            <person name="Abbott A."/>
            <person name="Scott K."/>
            <person name="Johnson D."/>
            <person name="Minx P."/>
            <person name="Bentley D."/>
            <person name="Fulton B."/>
            <person name="Miller N."/>
            <person name="Greco T."/>
            <person name="Kemp K."/>
            <person name="Kramer J."/>
            <person name="Fulton L."/>
            <person name="Mardis E."/>
            <person name="Dante M."/>
            <person name="Pepin K."/>
            <person name="Hillier L.W."/>
            <person name="Nelson J."/>
            <person name="Spieth J."/>
            <person name="Ryan E."/>
            <person name="Andrews S."/>
            <person name="Geisel C."/>
            <person name="Layman D."/>
            <person name="Du H."/>
            <person name="Ali J."/>
            <person name="Berghoff A."/>
            <person name="Jones K."/>
            <person name="Drone K."/>
            <person name="Cotton M."/>
            <person name="Joshu C."/>
            <person name="Antonoiu B."/>
            <person name="Zidanic M."/>
            <person name="Strong C."/>
            <person name="Sun H."/>
            <person name="Lamar B."/>
            <person name="Yordan C."/>
            <person name="Ma P."/>
            <person name="Zhong J."/>
            <person name="Preston R."/>
            <person name="Vil D."/>
            <person name="Shekher M."/>
            <person name="Matero A."/>
            <person name="Shah R."/>
            <person name="Swaby I.K."/>
            <person name="O'Shaughnessy A."/>
            <person name="Rodriguez M."/>
            <person name="Hoffman J."/>
            <person name="Till S."/>
            <person name="Granat S."/>
            <person name="Shohdy N."/>
            <person name="Hasegawa A."/>
            <person name="Hameed A."/>
            <person name="Lodhi M."/>
            <person name="Johnson A."/>
            <person name="Chen E."/>
            <person name="Marra M.A."/>
            <person name="Martienssen R."/>
            <person name="McCombie W.R."/>
        </authorList>
    </citation>
    <scope>NUCLEOTIDE SEQUENCE [LARGE SCALE GENOMIC DNA]</scope>
    <source>
        <strain>cv. Columbia</strain>
    </source>
</reference>
<reference key="2">
    <citation type="journal article" date="2017" name="Plant J.">
        <title>Araport11: a complete reannotation of the Arabidopsis thaliana reference genome.</title>
        <authorList>
            <person name="Cheng C.Y."/>
            <person name="Krishnakumar V."/>
            <person name="Chan A.P."/>
            <person name="Thibaud-Nissen F."/>
            <person name="Schobel S."/>
            <person name="Town C.D."/>
        </authorList>
    </citation>
    <scope>GENOME REANNOTATION</scope>
    <source>
        <strain>cv. Columbia</strain>
    </source>
</reference>
<reference key="3">
    <citation type="journal article" date="2006" name="Plant Biotechnol. J.">
        <title>Simultaneous high-throughput recombinational cloning of open reading frames in closed and open configurations.</title>
        <authorList>
            <person name="Underwood B.A."/>
            <person name="Vanderhaeghen R."/>
            <person name="Whitford R."/>
            <person name="Town C.D."/>
            <person name="Hilson P."/>
        </authorList>
    </citation>
    <scope>NUCLEOTIDE SEQUENCE [LARGE SCALE MRNA]</scope>
    <source>
        <strain>cv. Columbia</strain>
    </source>
</reference>
<reference key="4">
    <citation type="journal article" date="2005" name="Nature">
        <title>A new family of RhoGEFs activates the Rop molecular switch in plants.</title>
        <authorList>
            <person name="Berken A."/>
            <person name="Thomas C."/>
            <person name="Wittinghofer A."/>
        </authorList>
    </citation>
    <scope>GENE FAMILY</scope>
</reference>
<reference key="5">
    <citation type="journal article" date="2006" name="Plant Cell">
        <title>Members of a novel class of Arabidopsis Rho guanine nucleotide exchange factors control Rho GTPase-dependent polar growth.</title>
        <authorList>
            <person name="Gu Y."/>
            <person name="Li S."/>
            <person name="Lord E.M."/>
            <person name="Yang Z."/>
        </authorList>
    </citation>
    <scope>INTERACTION WITH ARAC11/ROP1</scope>
    <scope>SUBCELLULAR LOCATION</scope>
    <scope>TISSUE SPECIFICITY</scope>
</reference>
<reference key="6">
    <citation type="journal article" date="2012" name="FEBS Lett.">
        <title>ROPGEF1 and ROPGEF4 are functional regulators of ROP11 GTPase in ABA-mediated stomatal closure in Arabidopsis.</title>
        <authorList>
            <person name="Li Z."/>
            <person name="Liu D."/>
        </authorList>
    </citation>
    <scope>INTERACTION WITH ARAC10/ROP11</scope>
    <scope>TISSUE SPECIFICITY</scope>
</reference>
<reference key="7">
    <citation type="journal article" date="2016" name="Nature">
        <title>Tip-localized receptors control pollen tube growth and LURE sensing in Arabidopsis.</title>
        <authorList>
            <person name="Takeuchi H."/>
            <person name="Higashiyama T."/>
        </authorList>
    </citation>
    <scope>INTERACTION WITH PRK6</scope>
</reference>
<accession>Q9SVQ3</accession>
<accession>A0MF70</accession>
<protein>
    <recommendedName>
        <fullName evidence="7">Rop guanine nucleotide exchange factor 9</fullName>
        <shortName evidence="7">AtRopGEF9</shortName>
    </recommendedName>
    <alternativeName>
        <fullName evidence="7">Rho of plants guanine nucleotide exchange factor 9</fullName>
    </alternativeName>
</protein>
<keyword id="KW-1003">Cell membrane</keyword>
<keyword id="KW-0344">Guanine-nucleotide releasing factor</keyword>
<keyword id="KW-0472">Membrane</keyword>
<keyword id="KW-1185">Reference proteome</keyword>
<proteinExistence type="evidence at protein level"/>
<feature type="chain" id="PRO_0000423894" description="Rop guanine nucleotide exchange factor 9">
    <location>
        <begin position="1"/>
        <end position="517"/>
    </location>
</feature>
<feature type="domain" description="PRONE" evidence="2">
    <location>
        <begin position="65"/>
        <end position="429"/>
    </location>
</feature>
<feature type="region of interest" description="Disordered" evidence="3">
    <location>
        <begin position="16"/>
        <end position="76"/>
    </location>
</feature>
<feature type="region of interest" description="Disordered" evidence="3">
    <location>
        <begin position="428"/>
        <end position="517"/>
    </location>
</feature>
<feature type="compositionally biased region" description="Polar residues" evidence="3">
    <location>
        <begin position="39"/>
        <end position="63"/>
    </location>
</feature>
<feature type="compositionally biased region" description="Basic and acidic residues" evidence="3">
    <location>
        <begin position="66"/>
        <end position="76"/>
    </location>
</feature>
<feature type="compositionally biased region" description="Polar residues" evidence="3">
    <location>
        <begin position="440"/>
        <end position="452"/>
    </location>
</feature>
<gene>
    <name evidence="7" type="primary">ROPGEF9</name>
    <name evidence="9" type="ordered locus">At4g13240</name>
    <name evidence="10" type="ORF">F17N18.130</name>
</gene>
<sequence length="517" mass="58173">MVPSLERGISITSSFNLDRMFDSSPGKEQQQPHLAETTMPESQTQDSLGGSPVETSRPMTSRLISRRQDKQQSETEMMKDRFTKLLLGEDMSGGGKGVSSALALSNAITNLAASIFGEQTKLQPMAPDRRARWKKEIDWLLSVTDHIVEFVPSQQISKEGVCTEIMVTRQRGDLLMNIPALRKLDAMLIDTLDNFRGHNEFWYVSRDSEEGKQARNERTKDKWWLPPVKVPPNGLSESARRMLHFQKDSVSQVQKAAMAINAQVLSEMAIPDSYIESLPKNGRVSLGDSLYKSITEEWFDPEQFLSTLDLSTEHKVLDVKNRIEASIVIWKRKLHLKDNKSSWGSAVSLEKRELFEERAETILVLLKQKFPGLPQSSLDISKIQYNKDVGHAVLESYSRILESLGYTEMSRIDDVLYADSLARKQCTGEETSDGGKIATETDSASAGSSNYSGEEIEKLESQNSSKTTLLDFIGWSDNSSKGQSEKPPKSPRMTPKKLSYLEKLENLNGFRSPKDRH</sequence>
<comment type="function">
    <text evidence="1">Guanine-nucleotide exchange factor (GEF) that acts as an activator of Rop (Rho of plants) GTPases by promoting the exchange of GDP for GTP.</text>
</comment>
<comment type="subunit">
    <text evidence="4 5 6">Interacts with ARAC11/ROP1 and ARAC10/ROP11. Interacts with PRK6 (PubMed:26961657).</text>
</comment>
<comment type="subcellular location">
    <subcellularLocation>
        <location evidence="4">Cell membrane</location>
    </subcellularLocation>
    <text>Localizes to the apical region of the pollen tube plasma membrane.</text>
</comment>
<comment type="tissue specificity">
    <text evidence="4 5">Expressed in pollen grains and pollen tubes.</text>
</comment>
<comment type="domain">
    <text evidence="1">The PRONE (plant-specific Rop nucleotide exchanger) domain is responsible for the GEF activity.</text>
</comment>
<comment type="sequence caution" evidence="8">
    <conflict type="erroneous termination">
        <sequence resource="EMBL-CDS" id="ABK28630"/>
    </conflict>
    <text>Extended C-terminus.</text>
</comment>
<evidence type="ECO:0000250" key="1"/>
<evidence type="ECO:0000255" key="2">
    <source>
        <dbReference type="PROSITE-ProRule" id="PRU00663"/>
    </source>
</evidence>
<evidence type="ECO:0000256" key="3">
    <source>
        <dbReference type="SAM" id="MobiDB-lite"/>
    </source>
</evidence>
<evidence type="ECO:0000269" key="4">
    <source>
    </source>
</evidence>
<evidence type="ECO:0000269" key="5">
    <source>
    </source>
</evidence>
<evidence type="ECO:0000269" key="6">
    <source>
    </source>
</evidence>
<evidence type="ECO:0000303" key="7">
    <source>
    </source>
</evidence>
<evidence type="ECO:0000305" key="8"/>
<evidence type="ECO:0000312" key="9">
    <source>
        <dbReference type="Araport" id="AT4G13240"/>
    </source>
</evidence>
<evidence type="ECO:0000312" key="10">
    <source>
        <dbReference type="EMBL" id="CAB41934.1"/>
    </source>
</evidence>